<sequence length="205" mass="23456">MTKRSEAKYKIDRRMGQNIWGRPKSPVNRREYGPGQHGQRRKGKLSDFGVQLRAKQKLKGYYANISERQFHGIYVEAGRLKGDTGENLIGILERRLDTVVFRAKFVSTMFAARQFINHGHIKVNGRKVNIASYQVKPGDVIEVKEASKQLAIVLEATQLAERDVPDYIEADHSKMTAKFIRIPALSDVPFAVQMEPHLIVEFYSR</sequence>
<name>RS4_BRASB</name>
<reference key="1">
    <citation type="journal article" date="2007" name="Science">
        <title>Legumes symbioses: absence of nod genes in photosynthetic bradyrhizobia.</title>
        <authorList>
            <person name="Giraud E."/>
            <person name="Moulin L."/>
            <person name="Vallenet D."/>
            <person name="Barbe V."/>
            <person name="Cytryn E."/>
            <person name="Avarre J.-C."/>
            <person name="Jaubert M."/>
            <person name="Simon D."/>
            <person name="Cartieaux F."/>
            <person name="Prin Y."/>
            <person name="Bena G."/>
            <person name="Hannibal L."/>
            <person name="Fardoux J."/>
            <person name="Kojadinovic M."/>
            <person name="Vuillet L."/>
            <person name="Lajus A."/>
            <person name="Cruveiller S."/>
            <person name="Rouy Z."/>
            <person name="Mangenot S."/>
            <person name="Segurens B."/>
            <person name="Dossat C."/>
            <person name="Franck W.L."/>
            <person name="Chang W.-S."/>
            <person name="Saunders E."/>
            <person name="Bruce D."/>
            <person name="Richardson P."/>
            <person name="Normand P."/>
            <person name="Dreyfus B."/>
            <person name="Pignol D."/>
            <person name="Stacey G."/>
            <person name="Emerich D."/>
            <person name="Vermeglio A."/>
            <person name="Medigue C."/>
            <person name="Sadowsky M."/>
        </authorList>
    </citation>
    <scope>NUCLEOTIDE SEQUENCE [LARGE SCALE GENOMIC DNA]</scope>
    <source>
        <strain>BTAi1 / ATCC BAA-1182</strain>
    </source>
</reference>
<proteinExistence type="inferred from homology"/>
<dbReference type="EMBL" id="CP000494">
    <property type="protein sequence ID" value="ABQ37362.1"/>
    <property type="molecule type" value="Genomic_DNA"/>
</dbReference>
<dbReference type="RefSeq" id="WP_012045327.1">
    <property type="nucleotide sequence ID" value="NC_009485.1"/>
</dbReference>
<dbReference type="SMR" id="A5EMG8"/>
<dbReference type="STRING" id="288000.BBta_5388"/>
<dbReference type="KEGG" id="bbt:BBta_5388"/>
<dbReference type="eggNOG" id="COG0522">
    <property type="taxonomic scope" value="Bacteria"/>
</dbReference>
<dbReference type="HOGENOM" id="CLU_092403_0_0_5"/>
<dbReference type="OrthoDB" id="9803672at2"/>
<dbReference type="Proteomes" id="UP000000246">
    <property type="component" value="Chromosome"/>
</dbReference>
<dbReference type="GO" id="GO:0015935">
    <property type="term" value="C:small ribosomal subunit"/>
    <property type="evidence" value="ECO:0007669"/>
    <property type="project" value="InterPro"/>
</dbReference>
<dbReference type="GO" id="GO:0019843">
    <property type="term" value="F:rRNA binding"/>
    <property type="evidence" value="ECO:0007669"/>
    <property type="project" value="UniProtKB-UniRule"/>
</dbReference>
<dbReference type="GO" id="GO:0003735">
    <property type="term" value="F:structural constituent of ribosome"/>
    <property type="evidence" value="ECO:0007669"/>
    <property type="project" value="InterPro"/>
</dbReference>
<dbReference type="GO" id="GO:0042274">
    <property type="term" value="P:ribosomal small subunit biogenesis"/>
    <property type="evidence" value="ECO:0007669"/>
    <property type="project" value="TreeGrafter"/>
</dbReference>
<dbReference type="GO" id="GO:0006412">
    <property type="term" value="P:translation"/>
    <property type="evidence" value="ECO:0007669"/>
    <property type="project" value="UniProtKB-UniRule"/>
</dbReference>
<dbReference type="CDD" id="cd00165">
    <property type="entry name" value="S4"/>
    <property type="match status" value="1"/>
</dbReference>
<dbReference type="FunFam" id="3.10.290.10:FF:000001">
    <property type="entry name" value="30S ribosomal protein S4"/>
    <property type="match status" value="1"/>
</dbReference>
<dbReference type="Gene3D" id="1.10.1050.10">
    <property type="entry name" value="Ribosomal Protein S4 Delta 41, Chain A, domain 1"/>
    <property type="match status" value="1"/>
</dbReference>
<dbReference type="Gene3D" id="3.10.290.10">
    <property type="entry name" value="RNA-binding S4 domain"/>
    <property type="match status" value="1"/>
</dbReference>
<dbReference type="HAMAP" id="MF_01306_B">
    <property type="entry name" value="Ribosomal_uS4_B"/>
    <property type="match status" value="1"/>
</dbReference>
<dbReference type="InterPro" id="IPR022801">
    <property type="entry name" value="Ribosomal_uS4"/>
</dbReference>
<dbReference type="InterPro" id="IPR005709">
    <property type="entry name" value="Ribosomal_uS4_bac-type"/>
</dbReference>
<dbReference type="InterPro" id="IPR018079">
    <property type="entry name" value="Ribosomal_uS4_CS"/>
</dbReference>
<dbReference type="InterPro" id="IPR001912">
    <property type="entry name" value="Ribosomal_uS4_N"/>
</dbReference>
<dbReference type="InterPro" id="IPR002942">
    <property type="entry name" value="S4_RNA-bd"/>
</dbReference>
<dbReference type="InterPro" id="IPR036986">
    <property type="entry name" value="S4_RNA-bd_sf"/>
</dbReference>
<dbReference type="NCBIfam" id="NF003717">
    <property type="entry name" value="PRK05327.1"/>
    <property type="match status" value="1"/>
</dbReference>
<dbReference type="NCBIfam" id="TIGR01017">
    <property type="entry name" value="rpsD_bact"/>
    <property type="match status" value="1"/>
</dbReference>
<dbReference type="PANTHER" id="PTHR11831">
    <property type="entry name" value="30S 40S RIBOSOMAL PROTEIN"/>
    <property type="match status" value="1"/>
</dbReference>
<dbReference type="PANTHER" id="PTHR11831:SF4">
    <property type="entry name" value="SMALL RIBOSOMAL SUBUNIT PROTEIN US4M"/>
    <property type="match status" value="1"/>
</dbReference>
<dbReference type="Pfam" id="PF00163">
    <property type="entry name" value="Ribosomal_S4"/>
    <property type="match status" value="1"/>
</dbReference>
<dbReference type="Pfam" id="PF01479">
    <property type="entry name" value="S4"/>
    <property type="match status" value="1"/>
</dbReference>
<dbReference type="SMART" id="SM01390">
    <property type="entry name" value="Ribosomal_S4"/>
    <property type="match status" value="1"/>
</dbReference>
<dbReference type="SMART" id="SM00363">
    <property type="entry name" value="S4"/>
    <property type="match status" value="1"/>
</dbReference>
<dbReference type="SUPFAM" id="SSF55174">
    <property type="entry name" value="Alpha-L RNA-binding motif"/>
    <property type="match status" value="1"/>
</dbReference>
<dbReference type="PROSITE" id="PS00632">
    <property type="entry name" value="RIBOSOMAL_S4"/>
    <property type="match status" value="1"/>
</dbReference>
<dbReference type="PROSITE" id="PS50889">
    <property type="entry name" value="S4"/>
    <property type="match status" value="1"/>
</dbReference>
<keyword id="KW-1185">Reference proteome</keyword>
<keyword id="KW-0687">Ribonucleoprotein</keyword>
<keyword id="KW-0689">Ribosomal protein</keyword>
<keyword id="KW-0694">RNA-binding</keyword>
<keyword id="KW-0699">rRNA-binding</keyword>
<accession>A5EMG8</accession>
<protein>
    <recommendedName>
        <fullName evidence="1">Small ribosomal subunit protein uS4</fullName>
    </recommendedName>
    <alternativeName>
        <fullName evidence="3">30S ribosomal protein S4</fullName>
    </alternativeName>
</protein>
<comment type="function">
    <text evidence="1">One of the primary rRNA binding proteins, it binds directly to 16S rRNA where it nucleates assembly of the body of the 30S subunit.</text>
</comment>
<comment type="function">
    <text evidence="1">With S5 and S12 plays an important role in translational accuracy.</text>
</comment>
<comment type="subunit">
    <text evidence="1">Part of the 30S ribosomal subunit. Contacts protein S5. The interaction surface between S4 and S5 is involved in control of translational fidelity.</text>
</comment>
<comment type="similarity">
    <text evidence="1">Belongs to the universal ribosomal protein uS4 family.</text>
</comment>
<feature type="chain" id="PRO_0000322269" description="Small ribosomal subunit protein uS4">
    <location>
        <begin position="1"/>
        <end position="205"/>
    </location>
</feature>
<feature type="domain" description="S4 RNA-binding" evidence="1">
    <location>
        <begin position="94"/>
        <end position="157"/>
    </location>
</feature>
<feature type="region of interest" description="Disordered" evidence="2">
    <location>
        <begin position="18"/>
        <end position="46"/>
    </location>
</feature>
<organism>
    <name type="scientific">Bradyrhizobium sp. (strain BTAi1 / ATCC BAA-1182)</name>
    <dbReference type="NCBI Taxonomy" id="288000"/>
    <lineage>
        <taxon>Bacteria</taxon>
        <taxon>Pseudomonadati</taxon>
        <taxon>Pseudomonadota</taxon>
        <taxon>Alphaproteobacteria</taxon>
        <taxon>Hyphomicrobiales</taxon>
        <taxon>Nitrobacteraceae</taxon>
        <taxon>Bradyrhizobium</taxon>
    </lineage>
</organism>
<gene>
    <name evidence="1" type="primary">rpsD</name>
    <name type="ordered locus">BBta_5388</name>
</gene>
<evidence type="ECO:0000255" key="1">
    <source>
        <dbReference type="HAMAP-Rule" id="MF_01306"/>
    </source>
</evidence>
<evidence type="ECO:0000256" key="2">
    <source>
        <dbReference type="SAM" id="MobiDB-lite"/>
    </source>
</evidence>
<evidence type="ECO:0000305" key="3"/>